<proteinExistence type="inferred from homology"/>
<name>SYM_MARMM</name>
<protein>
    <recommendedName>
        <fullName evidence="1">Methionine--tRNA ligase</fullName>
        <ecNumber evidence="1">6.1.1.10</ecNumber>
    </recommendedName>
    <alternativeName>
        <fullName evidence="1">Methionyl-tRNA synthetase</fullName>
        <shortName evidence="1">MetRS</shortName>
    </alternativeName>
</protein>
<gene>
    <name evidence="1" type="primary">metG</name>
    <name type="ordered locus">Mmar10_1827</name>
</gene>
<comment type="function">
    <text evidence="1">Is required not only for elongation of protein synthesis but also for the initiation of all mRNA translation through initiator tRNA(fMet) aminoacylation.</text>
</comment>
<comment type="catalytic activity">
    <reaction evidence="1">
        <text>tRNA(Met) + L-methionine + ATP = L-methionyl-tRNA(Met) + AMP + diphosphate</text>
        <dbReference type="Rhea" id="RHEA:13481"/>
        <dbReference type="Rhea" id="RHEA-COMP:9667"/>
        <dbReference type="Rhea" id="RHEA-COMP:9698"/>
        <dbReference type="ChEBI" id="CHEBI:30616"/>
        <dbReference type="ChEBI" id="CHEBI:33019"/>
        <dbReference type="ChEBI" id="CHEBI:57844"/>
        <dbReference type="ChEBI" id="CHEBI:78442"/>
        <dbReference type="ChEBI" id="CHEBI:78530"/>
        <dbReference type="ChEBI" id="CHEBI:456215"/>
        <dbReference type="EC" id="6.1.1.10"/>
    </reaction>
</comment>
<comment type="cofactor">
    <cofactor evidence="1">
        <name>Zn(2+)</name>
        <dbReference type="ChEBI" id="CHEBI:29105"/>
    </cofactor>
    <text evidence="1">Binds 1 zinc ion per subunit.</text>
</comment>
<comment type="subunit">
    <text evidence="1">Monomer.</text>
</comment>
<comment type="subcellular location">
    <subcellularLocation>
        <location evidence="1">Cytoplasm</location>
    </subcellularLocation>
</comment>
<comment type="similarity">
    <text evidence="1">Belongs to the class-I aminoacyl-tRNA synthetase family. MetG type 1 subfamily.</text>
</comment>
<accession>Q0ANL8</accession>
<sequence>MARILITSALPYINGVKHLGNLAGSMLPADVYARFQRLRGHDVLYVCATDEHGTPAELAADAAGMDVRAYCDEQHDIQKRSGEGFSLSYDYFGRTSNAPNIRLTQHFAQVLEEKGLIAERVEEQVFSIDDDRFLPDRYVEGTCPHCGFERARGDQCDNCGRLLEPTDLKEPYSKISGSKNLEVRETKHLHLVQTQMETKIRDWVDASTEWPSLAKSIAYKWLDEGLRDRSITRDLKWGVPVAQDGTPREGFEGKVFYVWFDAPIGYIGATVEWAEAGGGDWESWWRTDKGADDVTYVQFMGKDNVAFHTVSFPATILGSEEPWKTVDKLKAFNWLTWYGGKFSTSEKRGVFMDQALDILPGDYWRWYLTANAPEGSDAAFTWEHFQGLINSDLANVLGNFVNRITKYTVSKFDGTLPSAGTPGENEAWMAAELDQRLPALVANMEAMEFRKAAAEVRAIWAAGNEYLTKAEPWVKYKSDVDAAAVGVRTGLNLVALFGILAQPFIPEAASKILDALGVPDDRRSWEFDGPASALLDALPHGMAITPPAVLFAKIEDAQVAEWTERFGGAPEA</sequence>
<evidence type="ECO:0000255" key="1">
    <source>
        <dbReference type="HAMAP-Rule" id="MF_00098"/>
    </source>
</evidence>
<reference key="1">
    <citation type="submission" date="2006-08" db="EMBL/GenBank/DDBJ databases">
        <title>Complete sequence of Maricaulis maris MCS10.</title>
        <authorList>
            <consortium name="US DOE Joint Genome Institute"/>
            <person name="Copeland A."/>
            <person name="Lucas S."/>
            <person name="Lapidus A."/>
            <person name="Barry K."/>
            <person name="Detter J.C."/>
            <person name="Glavina del Rio T."/>
            <person name="Hammon N."/>
            <person name="Israni S."/>
            <person name="Dalin E."/>
            <person name="Tice H."/>
            <person name="Pitluck S."/>
            <person name="Saunders E."/>
            <person name="Brettin T."/>
            <person name="Bruce D."/>
            <person name="Han C."/>
            <person name="Tapia R."/>
            <person name="Gilna P."/>
            <person name="Schmutz J."/>
            <person name="Larimer F."/>
            <person name="Land M."/>
            <person name="Hauser L."/>
            <person name="Kyrpides N."/>
            <person name="Mikhailova N."/>
            <person name="Viollier P."/>
            <person name="Stephens C."/>
            <person name="Richardson P."/>
        </authorList>
    </citation>
    <scope>NUCLEOTIDE SEQUENCE [LARGE SCALE GENOMIC DNA]</scope>
    <source>
        <strain>MCS10</strain>
    </source>
</reference>
<organism>
    <name type="scientific">Maricaulis maris (strain MCS10)</name>
    <name type="common">Caulobacter maris</name>
    <dbReference type="NCBI Taxonomy" id="394221"/>
    <lineage>
        <taxon>Bacteria</taxon>
        <taxon>Pseudomonadati</taxon>
        <taxon>Pseudomonadota</taxon>
        <taxon>Alphaproteobacteria</taxon>
        <taxon>Maricaulales</taxon>
        <taxon>Maricaulaceae</taxon>
        <taxon>Maricaulis</taxon>
    </lineage>
</organism>
<feature type="chain" id="PRO_0000331848" description="Methionine--tRNA ligase">
    <location>
        <begin position="1"/>
        <end position="572"/>
    </location>
</feature>
<feature type="short sequence motif" description="'HIGH' region">
    <location>
        <begin position="11"/>
        <end position="21"/>
    </location>
</feature>
<feature type="short sequence motif" description="'KMSKS' region">
    <location>
        <begin position="341"/>
        <end position="345"/>
    </location>
</feature>
<feature type="binding site" evidence="1">
    <location>
        <position position="143"/>
    </location>
    <ligand>
        <name>Zn(2+)</name>
        <dbReference type="ChEBI" id="CHEBI:29105"/>
    </ligand>
</feature>
<feature type="binding site" evidence="1">
    <location>
        <position position="146"/>
    </location>
    <ligand>
        <name>Zn(2+)</name>
        <dbReference type="ChEBI" id="CHEBI:29105"/>
    </ligand>
</feature>
<feature type="binding site" evidence="1">
    <location>
        <position position="156"/>
    </location>
    <ligand>
        <name>Zn(2+)</name>
        <dbReference type="ChEBI" id="CHEBI:29105"/>
    </ligand>
</feature>
<feature type="binding site" evidence="1">
    <location>
        <position position="159"/>
    </location>
    <ligand>
        <name>Zn(2+)</name>
        <dbReference type="ChEBI" id="CHEBI:29105"/>
    </ligand>
</feature>
<feature type="binding site" evidence="1">
    <location>
        <position position="344"/>
    </location>
    <ligand>
        <name>ATP</name>
        <dbReference type="ChEBI" id="CHEBI:30616"/>
    </ligand>
</feature>
<keyword id="KW-0030">Aminoacyl-tRNA synthetase</keyword>
<keyword id="KW-0067">ATP-binding</keyword>
<keyword id="KW-0963">Cytoplasm</keyword>
<keyword id="KW-0436">Ligase</keyword>
<keyword id="KW-0479">Metal-binding</keyword>
<keyword id="KW-0547">Nucleotide-binding</keyword>
<keyword id="KW-0648">Protein biosynthesis</keyword>
<keyword id="KW-1185">Reference proteome</keyword>
<keyword id="KW-0862">Zinc</keyword>
<dbReference type="EC" id="6.1.1.10" evidence="1"/>
<dbReference type="EMBL" id="CP000449">
    <property type="protein sequence ID" value="ABI66119.1"/>
    <property type="molecule type" value="Genomic_DNA"/>
</dbReference>
<dbReference type="RefSeq" id="WP_011643764.1">
    <property type="nucleotide sequence ID" value="NC_008347.1"/>
</dbReference>
<dbReference type="SMR" id="Q0ANL8"/>
<dbReference type="STRING" id="394221.Mmar10_1827"/>
<dbReference type="KEGG" id="mmr:Mmar10_1827"/>
<dbReference type="eggNOG" id="COG0143">
    <property type="taxonomic scope" value="Bacteria"/>
</dbReference>
<dbReference type="HOGENOM" id="CLU_009710_1_2_5"/>
<dbReference type="OrthoDB" id="9810191at2"/>
<dbReference type="Proteomes" id="UP000001964">
    <property type="component" value="Chromosome"/>
</dbReference>
<dbReference type="GO" id="GO:0017101">
    <property type="term" value="C:aminoacyl-tRNA synthetase multienzyme complex"/>
    <property type="evidence" value="ECO:0007669"/>
    <property type="project" value="TreeGrafter"/>
</dbReference>
<dbReference type="GO" id="GO:0005829">
    <property type="term" value="C:cytosol"/>
    <property type="evidence" value="ECO:0007669"/>
    <property type="project" value="TreeGrafter"/>
</dbReference>
<dbReference type="GO" id="GO:0005524">
    <property type="term" value="F:ATP binding"/>
    <property type="evidence" value="ECO:0007669"/>
    <property type="project" value="UniProtKB-UniRule"/>
</dbReference>
<dbReference type="GO" id="GO:0046872">
    <property type="term" value="F:metal ion binding"/>
    <property type="evidence" value="ECO:0007669"/>
    <property type="project" value="UniProtKB-KW"/>
</dbReference>
<dbReference type="GO" id="GO:0004825">
    <property type="term" value="F:methionine-tRNA ligase activity"/>
    <property type="evidence" value="ECO:0007669"/>
    <property type="project" value="UniProtKB-UniRule"/>
</dbReference>
<dbReference type="GO" id="GO:0006431">
    <property type="term" value="P:methionyl-tRNA aminoacylation"/>
    <property type="evidence" value="ECO:0007669"/>
    <property type="project" value="UniProtKB-UniRule"/>
</dbReference>
<dbReference type="CDD" id="cd07957">
    <property type="entry name" value="Anticodon_Ia_Met"/>
    <property type="match status" value="1"/>
</dbReference>
<dbReference type="CDD" id="cd00814">
    <property type="entry name" value="MetRS_core"/>
    <property type="match status" value="1"/>
</dbReference>
<dbReference type="FunFam" id="2.20.28.20:FF:000001">
    <property type="entry name" value="Methionine--tRNA ligase"/>
    <property type="match status" value="1"/>
</dbReference>
<dbReference type="Gene3D" id="3.40.50.620">
    <property type="entry name" value="HUPs"/>
    <property type="match status" value="1"/>
</dbReference>
<dbReference type="Gene3D" id="1.10.730.10">
    <property type="entry name" value="Isoleucyl-tRNA Synthetase, Domain 1"/>
    <property type="match status" value="1"/>
</dbReference>
<dbReference type="Gene3D" id="2.20.28.20">
    <property type="entry name" value="Methionyl-tRNA synthetase, Zn-domain"/>
    <property type="match status" value="1"/>
</dbReference>
<dbReference type="HAMAP" id="MF_00098">
    <property type="entry name" value="Met_tRNA_synth_type1"/>
    <property type="match status" value="1"/>
</dbReference>
<dbReference type="InterPro" id="IPR041872">
    <property type="entry name" value="Anticodon_Met"/>
</dbReference>
<dbReference type="InterPro" id="IPR023458">
    <property type="entry name" value="Met-tRNA_ligase_1"/>
</dbReference>
<dbReference type="InterPro" id="IPR014758">
    <property type="entry name" value="Met-tRNA_synth"/>
</dbReference>
<dbReference type="InterPro" id="IPR015413">
    <property type="entry name" value="Methionyl/Leucyl_tRNA_Synth"/>
</dbReference>
<dbReference type="InterPro" id="IPR033911">
    <property type="entry name" value="MetRS_core"/>
</dbReference>
<dbReference type="InterPro" id="IPR029038">
    <property type="entry name" value="MetRS_Zn"/>
</dbReference>
<dbReference type="InterPro" id="IPR014729">
    <property type="entry name" value="Rossmann-like_a/b/a_fold"/>
</dbReference>
<dbReference type="InterPro" id="IPR009080">
    <property type="entry name" value="tRNAsynth_Ia_anticodon-bd"/>
</dbReference>
<dbReference type="NCBIfam" id="TIGR00398">
    <property type="entry name" value="metG"/>
    <property type="match status" value="1"/>
</dbReference>
<dbReference type="PANTHER" id="PTHR45765">
    <property type="entry name" value="METHIONINE--TRNA LIGASE"/>
    <property type="match status" value="1"/>
</dbReference>
<dbReference type="PANTHER" id="PTHR45765:SF1">
    <property type="entry name" value="METHIONINE--TRNA LIGASE, CYTOPLASMIC"/>
    <property type="match status" value="1"/>
</dbReference>
<dbReference type="Pfam" id="PF19303">
    <property type="entry name" value="Anticodon_3"/>
    <property type="match status" value="1"/>
</dbReference>
<dbReference type="Pfam" id="PF09334">
    <property type="entry name" value="tRNA-synt_1g"/>
    <property type="match status" value="1"/>
</dbReference>
<dbReference type="PRINTS" id="PR01041">
    <property type="entry name" value="TRNASYNTHMET"/>
</dbReference>
<dbReference type="SUPFAM" id="SSF47323">
    <property type="entry name" value="Anticodon-binding domain of a subclass of class I aminoacyl-tRNA synthetases"/>
    <property type="match status" value="1"/>
</dbReference>
<dbReference type="SUPFAM" id="SSF57770">
    <property type="entry name" value="Methionyl-tRNA synthetase (MetRS), Zn-domain"/>
    <property type="match status" value="1"/>
</dbReference>
<dbReference type="SUPFAM" id="SSF52374">
    <property type="entry name" value="Nucleotidylyl transferase"/>
    <property type="match status" value="1"/>
</dbReference>